<protein>
    <recommendedName>
        <fullName>Ribonuclease HII</fullName>
        <shortName>RNase HII</shortName>
        <ecNumber>3.1.26.4</ecNumber>
    </recommendedName>
</protein>
<gene>
    <name type="primary">rnhB</name>
    <name type="ordered locus">ML1611</name>
    <name type="ORF">MLCB250.40</name>
</gene>
<organism>
    <name type="scientific">Mycobacterium leprae (strain TN)</name>
    <dbReference type="NCBI Taxonomy" id="272631"/>
    <lineage>
        <taxon>Bacteria</taxon>
        <taxon>Bacillati</taxon>
        <taxon>Actinomycetota</taxon>
        <taxon>Actinomycetes</taxon>
        <taxon>Mycobacteriales</taxon>
        <taxon>Mycobacteriaceae</taxon>
        <taxon>Mycobacterium</taxon>
    </lineage>
</organism>
<feature type="chain" id="PRO_0000111591" description="Ribonuclease HII">
    <location>
        <begin position="1"/>
        <end position="240"/>
    </location>
</feature>
<feature type="domain" description="RNase H type-2" evidence="2">
    <location>
        <begin position="33"/>
        <end position="222"/>
    </location>
</feature>
<feature type="binding site" evidence="1">
    <location>
        <position position="39"/>
    </location>
    <ligand>
        <name>a divalent metal cation</name>
        <dbReference type="ChEBI" id="CHEBI:60240"/>
    </ligand>
</feature>
<feature type="binding site" evidence="1">
    <location>
        <position position="40"/>
    </location>
    <ligand>
        <name>a divalent metal cation</name>
        <dbReference type="ChEBI" id="CHEBI:60240"/>
    </ligand>
</feature>
<feature type="binding site" evidence="1">
    <location>
        <position position="131"/>
    </location>
    <ligand>
        <name>a divalent metal cation</name>
        <dbReference type="ChEBI" id="CHEBI:60240"/>
    </ligand>
</feature>
<comment type="function">
    <text evidence="1">Endonuclease that specifically degrades the RNA of RNA-DNA hybrids.</text>
</comment>
<comment type="catalytic activity">
    <reaction>
        <text>Endonucleolytic cleavage to 5'-phosphomonoester.</text>
        <dbReference type="EC" id="3.1.26.4"/>
    </reaction>
</comment>
<comment type="cofactor">
    <cofactor evidence="1">
        <name>Mn(2+)</name>
        <dbReference type="ChEBI" id="CHEBI:29035"/>
    </cofactor>
    <cofactor evidence="1">
        <name>Mg(2+)</name>
        <dbReference type="ChEBI" id="CHEBI:18420"/>
    </cofactor>
    <text evidence="1">Manganese or magnesium. Binds 1 divalent metal ion per monomer in the absence of substrate. May bind a second metal ion after substrate binding.</text>
</comment>
<comment type="subcellular location">
    <subcellularLocation>
        <location evidence="3">Cytoplasm</location>
    </subcellularLocation>
</comment>
<comment type="similarity">
    <text evidence="3">Belongs to the RNase HII family.</text>
</comment>
<name>RNH2_MYCLE</name>
<sequence>MATTWPPCRIIRKSGGLRGMWTLEYELQRSGLGPVAGVDEVGRGACAGPLVVAACVLGPGRLEESLDDSKKLSAKGREMLFPLICRYALAYHVVFIPSVEVDRHGVQVANIEGMRRAVAGLSVRPGYVLSDGFRVPGLSVPSLPVVGGDAVVACIAAASVLAKVSRDRLMVAMDADYPGYGFAAHKGYCTRAHSLALTQLGPCPEHRYSFINVRRIVTRSNTRAVAGFTPAPPAEHGECR</sequence>
<dbReference type="EC" id="3.1.26.4"/>
<dbReference type="EMBL" id="Z97369">
    <property type="protein sequence ID" value="CAB10634.1"/>
    <property type="molecule type" value="Genomic_DNA"/>
</dbReference>
<dbReference type="EMBL" id="AL583922">
    <property type="protein sequence ID" value="CAC30562.1"/>
    <property type="molecule type" value="Genomic_DNA"/>
</dbReference>
<dbReference type="PIR" id="E87110">
    <property type="entry name" value="E87110"/>
</dbReference>
<dbReference type="RefSeq" id="NP_302110.1">
    <property type="nucleotide sequence ID" value="NC_002677.1"/>
</dbReference>
<dbReference type="RefSeq" id="WP_010908431.1">
    <property type="nucleotide sequence ID" value="NC_002677.1"/>
</dbReference>
<dbReference type="SMR" id="O33022"/>
<dbReference type="STRING" id="272631.gene:17575452"/>
<dbReference type="KEGG" id="mle:ML1611"/>
<dbReference type="PATRIC" id="fig|272631.5.peg.3037"/>
<dbReference type="Leproma" id="ML1611"/>
<dbReference type="eggNOG" id="COG0164">
    <property type="taxonomic scope" value="Bacteria"/>
</dbReference>
<dbReference type="HOGENOM" id="CLU_036532_1_0_11"/>
<dbReference type="OrthoDB" id="9803420at2"/>
<dbReference type="Proteomes" id="UP000000806">
    <property type="component" value="Chromosome"/>
</dbReference>
<dbReference type="GO" id="GO:0005737">
    <property type="term" value="C:cytoplasm"/>
    <property type="evidence" value="ECO:0007669"/>
    <property type="project" value="UniProtKB-SubCell"/>
</dbReference>
<dbReference type="GO" id="GO:0032299">
    <property type="term" value="C:ribonuclease H2 complex"/>
    <property type="evidence" value="ECO:0007669"/>
    <property type="project" value="TreeGrafter"/>
</dbReference>
<dbReference type="GO" id="GO:0030145">
    <property type="term" value="F:manganese ion binding"/>
    <property type="evidence" value="ECO:0007669"/>
    <property type="project" value="UniProtKB-UniRule"/>
</dbReference>
<dbReference type="GO" id="GO:0003723">
    <property type="term" value="F:RNA binding"/>
    <property type="evidence" value="ECO:0007669"/>
    <property type="project" value="InterPro"/>
</dbReference>
<dbReference type="GO" id="GO:0004523">
    <property type="term" value="F:RNA-DNA hybrid ribonuclease activity"/>
    <property type="evidence" value="ECO:0007669"/>
    <property type="project" value="UniProtKB-UniRule"/>
</dbReference>
<dbReference type="GO" id="GO:0043137">
    <property type="term" value="P:DNA replication, removal of RNA primer"/>
    <property type="evidence" value="ECO:0007669"/>
    <property type="project" value="TreeGrafter"/>
</dbReference>
<dbReference type="GO" id="GO:0006298">
    <property type="term" value="P:mismatch repair"/>
    <property type="evidence" value="ECO:0007669"/>
    <property type="project" value="TreeGrafter"/>
</dbReference>
<dbReference type="CDD" id="cd07182">
    <property type="entry name" value="RNase_HII_bacteria_HII_like"/>
    <property type="match status" value="1"/>
</dbReference>
<dbReference type="FunFam" id="3.30.420.10:FF:000113">
    <property type="entry name" value="Ribonuclease HII"/>
    <property type="match status" value="1"/>
</dbReference>
<dbReference type="Gene3D" id="3.30.420.10">
    <property type="entry name" value="Ribonuclease H-like superfamily/Ribonuclease H"/>
    <property type="match status" value="1"/>
</dbReference>
<dbReference type="HAMAP" id="MF_00052_B">
    <property type="entry name" value="RNase_HII_B"/>
    <property type="match status" value="1"/>
</dbReference>
<dbReference type="InterPro" id="IPR022898">
    <property type="entry name" value="RNase_HII"/>
</dbReference>
<dbReference type="InterPro" id="IPR001352">
    <property type="entry name" value="RNase_HII/HIII"/>
</dbReference>
<dbReference type="InterPro" id="IPR024567">
    <property type="entry name" value="RNase_HII/HIII_dom"/>
</dbReference>
<dbReference type="InterPro" id="IPR012337">
    <property type="entry name" value="RNaseH-like_sf"/>
</dbReference>
<dbReference type="InterPro" id="IPR036397">
    <property type="entry name" value="RNaseH_sf"/>
</dbReference>
<dbReference type="NCBIfam" id="NF000595">
    <property type="entry name" value="PRK00015.1-3"/>
    <property type="match status" value="1"/>
</dbReference>
<dbReference type="NCBIfam" id="NF000598">
    <property type="entry name" value="PRK00015.2-2"/>
    <property type="match status" value="1"/>
</dbReference>
<dbReference type="NCBIfam" id="NF000600">
    <property type="entry name" value="PRK00015.2-4"/>
    <property type="match status" value="1"/>
</dbReference>
<dbReference type="PANTHER" id="PTHR10954">
    <property type="entry name" value="RIBONUCLEASE H2 SUBUNIT A"/>
    <property type="match status" value="1"/>
</dbReference>
<dbReference type="PANTHER" id="PTHR10954:SF18">
    <property type="entry name" value="RIBONUCLEASE HII"/>
    <property type="match status" value="1"/>
</dbReference>
<dbReference type="Pfam" id="PF01351">
    <property type="entry name" value="RNase_HII"/>
    <property type="match status" value="1"/>
</dbReference>
<dbReference type="SUPFAM" id="SSF53098">
    <property type="entry name" value="Ribonuclease H-like"/>
    <property type="match status" value="1"/>
</dbReference>
<dbReference type="PROSITE" id="PS51975">
    <property type="entry name" value="RNASE_H_2"/>
    <property type="match status" value="1"/>
</dbReference>
<keyword id="KW-0963">Cytoplasm</keyword>
<keyword id="KW-0255">Endonuclease</keyword>
<keyword id="KW-0378">Hydrolase</keyword>
<keyword id="KW-0464">Manganese</keyword>
<keyword id="KW-0479">Metal-binding</keyword>
<keyword id="KW-0540">Nuclease</keyword>
<keyword id="KW-1185">Reference proteome</keyword>
<accession>O33022</accession>
<proteinExistence type="inferred from homology"/>
<evidence type="ECO:0000250" key="1"/>
<evidence type="ECO:0000255" key="2">
    <source>
        <dbReference type="PROSITE-ProRule" id="PRU01319"/>
    </source>
</evidence>
<evidence type="ECO:0000305" key="3"/>
<reference key="1">
    <citation type="journal article" date="2001" name="Nature">
        <title>Massive gene decay in the leprosy bacillus.</title>
        <authorList>
            <person name="Cole S.T."/>
            <person name="Eiglmeier K."/>
            <person name="Parkhill J."/>
            <person name="James K.D."/>
            <person name="Thomson N.R."/>
            <person name="Wheeler P.R."/>
            <person name="Honore N."/>
            <person name="Garnier T."/>
            <person name="Churcher C.M."/>
            <person name="Harris D.E."/>
            <person name="Mungall K.L."/>
            <person name="Basham D."/>
            <person name="Brown D."/>
            <person name="Chillingworth T."/>
            <person name="Connor R."/>
            <person name="Davies R.M."/>
            <person name="Devlin K."/>
            <person name="Duthoy S."/>
            <person name="Feltwell T."/>
            <person name="Fraser A."/>
            <person name="Hamlin N."/>
            <person name="Holroyd S."/>
            <person name="Hornsby T."/>
            <person name="Jagels K."/>
            <person name="Lacroix C."/>
            <person name="Maclean J."/>
            <person name="Moule S."/>
            <person name="Murphy L.D."/>
            <person name="Oliver K."/>
            <person name="Quail M.A."/>
            <person name="Rajandream M.A."/>
            <person name="Rutherford K.M."/>
            <person name="Rutter S."/>
            <person name="Seeger K."/>
            <person name="Simon S."/>
            <person name="Simmonds M."/>
            <person name="Skelton J."/>
            <person name="Squares R."/>
            <person name="Squares S."/>
            <person name="Stevens K."/>
            <person name="Taylor K."/>
            <person name="Whitehead S."/>
            <person name="Woodward J.R."/>
            <person name="Barrell B.G."/>
        </authorList>
    </citation>
    <scope>NUCLEOTIDE SEQUENCE [LARGE SCALE GENOMIC DNA]</scope>
    <source>
        <strain>TN</strain>
    </source>
</reference>